<protein>
    <recommendedName>
        <fullName evidence="1">Endoribonuclease YbeY</fullName>
        <ecNumber evidence="1">3.1.-.-</ecNumber>
    </recommendedName>
</protein>
<evidence type="ECO:0000255" key="1">
    <source>
        <dbReference type="HAMAP-Rule" id="MF_00009"/>
    </source>
</evidence>
<proteinExistence type="inferred from homology"/>
<accession>B0T157</accession>
<dbReference type="EC" id="3.1.-.-" evidence="1"/>
<dbReference type="EMBL" id="CP000927">
    <property type="protein sequence ID" value="ABZ69161.1"/>
    <property type="molecule type" value="Genomic_DNA"/>
</dbReference>
<dbReference type="SMR" id="B0T157"/>
<dbReference type="STRING" id="366602.Caul_0023"/>
<dbReference type="KEGG" id="cak:Caul_0023"/>
<dbReference type="eggNOG" id="COG0319">
    <property type="taxonomic scope" value="Bacteria"/>
</dbReference>
<dbReference type="HOGENOM" id="CLU_106710_0_0_5"/>
<dbReference type="OrthoDB" id="9807740at2"/>
<dbReference type="GO" id="GO:0005737">
    <property type="term" value="C:cytoplasm"/>
    <property type="evidence" value="ECO:0007669"/>
    <property type="project" value="UniProtKB-SubCell"/>
</dbReference>
<dbReference type="GO" id="GO:0004222">
    <property type="term" value="F:metalloendopeptidase activity"/>
    <property type="evidence" value="ECO:0007669"/>
    <property type="project" value="InterPro"/>
</dbReference>
<dbReference type="GO" id="GO:0004521">
    <property type="term" value="F:RNA endonuclease activity"/>
    <property type="evidence" value="ECO:0007669"/>
    <property type="project" value="UniProtKB-UniRule"/>
</dbReference>
<dbReference type="GO" id="GO:0008270">
    <property type="term" value="F:zinc ion binding"/>
    <property type="evidence" value="ECO:0007669"/>
    <property type="project" value="UniProtKB-UniRule"/>
</dbReference>
<dbReference type="GO" id="GO:0006364">
    <property type="term" value="P:rRNA processing"/>
    <property type="evidence" value="ECO:0007669"/>
    <property type="project" value="UniProtKB-UniRule"/>
</dbReference>
<dbReference type="Gene3D" id="3.40.390.30">
    <property type="entry name" value="Metalloproteases ('zincins'), catalytic domain"/>
    <property type="match status" value="1"/>
</dbReference>
<dbReference type="HAMAP" id="MF_00009">
    <property type="entry name" value="Endoribonucl_YbeY"/>
    <property type="match status" value="1"/>
</dbReference>
<dbReference type="InterPro" id="IPR023091">
    <property type="entry name" value="MetalPrtase_cat_dom_sf_prd"/>
</dbReference>
<dbReference type="InterPro" id="IPR002036">
    <property type="entry name" value="YbeY"/>
</dbReference>
<dbReference type="InterPro" id="IPR020549">
    <property type="entry name" value="YbeY_CS"/>
</dbReference>
<dbReference type="NCBIfam" id="TIGR00043">
    <property type="entry name" value="rRNA maturation RNase YbeY"/>
    <property type="match status" value="1"/>
</dbReference>
<dbReference type="PANTHER" id="PTHR46986">
    <property type="entry name" value="ENDORIBONUCLEASE YBEY, CHLOROPLASTIC"/>
    <property type="match status" value="1"/>
</dbReference>
<dbReference type="PANTHER" id="PTHR46986:SF1">
    <property type="entry name" value="ENDORIBONUCLEASE YBEY, CHLOROPLASTIC"/>
    <property type="match status" value="1"/>
</dbReference>
<dbReference type="Pfam" id="PF02130">
    <property type="entry name" value="YbeY"/>
    <property type="match status" value="1"/>
</dbReference>
<dbReference type="SUPFAM" id="SSF55486">
    <property type="entry name" value="Metalloproteases ('zincins'), catalytic domain"/>
    <property type="match status" value="1"/>
</dbReference>
<dbReference type="PROSITE" id="PS01306">
    <property type="entry name" value="UPF0054"/>
    <property type="match status" value="1"/>
</dbReference>
<gene>
    <name evidence="1" type="primary">ybeY</name>
    <name type="ordered locus">Caul_0023</name>
</gene>
<keyword id="KW-0963">Cytoplasm</keyword>
<keyword id="KW-0255">Endonuclease</keyword>
<keyword id="KW-0378">Hydrolase</keyword>
<keyword id="KW-0479">Metal-binding</keyword>
<keyword id="KW-0540">Nuclease</keyword>
<keyword id="KW-0690">Ribosome biogenesis</keyword>
<keyword id="KW-0698">rRNA processing</keyword>
<keyword id="KW-0862">Zinc</keyword>
<sequence>MTLTVDIEIEDEAWTKAEPEVEALVWRAAQAVLDAHEDIEGHGIVILLADDDSVQTLNRDFRQKDYATNVLSFPSVTSPGANPEGQIGDIALAFGVCQREAAEQGKSLAHHLQHLVAHGVLHLLGYDHQDDADAEAMEAFEREILAGLDIPDPYAEPASAEG</sequence>
<organism>
    <name type="scientific">Caulobacter sp. (strain K31)</name>
    <dbReference type="NCBI Taxonomy" id="366602"/>
    <lineage>
        <taxon>Bacteria</taxon>
        <taxon>Pseudomonadati</taxon>
        <taxon>Pseudomonadota</taxon>
        <taxon>Alphaproteobacteria</taxon>
        <taxon>Caulobacterales</taxon>
        <taxon>Caulobacteraceae</taxon>
        <taxon>Caulobacter</taxon>
    </lineage>
</organism>
<reference key="1">
    <citation type="submission" date="2008-01" db="EMBL/GenBank/DDBJ databases">
        <title>Complete sequence of chromosome of Caulobacter sp. K31.</title>
        <authorList>
            <consortium name="US DOE Joint Genome Institute"/>
            <person name="Copeland A."/>
            <person name="Lucas S."/>
            <person name="Lapidus A."/>
            <person name="Barry K."/>
            <person name="Glavina del Rio T."/>
            <person name="Dalin E."/>
            <person name="Tice H."/>
            <person name="Pitluck S."/>
            <person name="Bruce D."/>
            <person name="Goodwin L."/>
            <person name="Thompson L.S."/>
            <person name="Brettin T."/>
            <person name="Detter J.C."/>
            <person name="Han C."/>
            <person name="Schmutz J."/>
            <person name="Larimer F."/>
            <person name="Land M."/>
            <person name="Hauser L."/>
            <person name="Kyrpides N."/>
            <person name="Kim E."/>
            <person name="Stephens C."/>
            <person name="Richardson P."/>
        </authorList>
    </citation>
    <scope>NUCLEOTIDE SEQUENCE [LARGE SCALE GENOMIC DNA]</scope>
    <source>
        <strain>K31</strain>
    </source>
</reference>
<comment type="function">
    <text evidence="1">Single strand-specific metallo-endoribonuclease involved in late-stage 70S ribosome quality control and in maturation of the 3' terminus of the 16S rRNA.</text>
</comment>
<comment type="cofactor">
    <cofactor evidence="1">
        <name>Zn(2+)</name>
        <dbReference type="ChEBI" id="CHEBI:29105"/>
    </cofactor>
    <text evidence="1">Binds 1 zinc ion.</text>
</comment>
<comment type="subcellular location">
    <subcellularLocation>
        <location evidence="1">Cytoplasm</location>
    </subcellularLocation>
</comment>
<comment type="similarity">
    <text evidence="1">Belongs to the endoribonuclease YbeY family.</text>
</comment>
<name>YBEY_CAUSK</name>
<feature type="chain" id="PRO_0000336008" description="Endoribonuclease YbeY">
    <location>
        <begin position="1"/>
        <end position="162"/>
    </location>
</feature>
<feature type="binding site" evidence="1">
    <location>
        <position position="118"/>
    </location>
    <ligand>
        <name>Zn(2+)</name>
        <dbReference type="ChEBI" id="CHEBI:29105"/>
        <note>catalytic</note>
    </ligand>
</feature>
<feature type="binding site" evidence="1">
    <location>
        <position position="122"/>
    </location>
    <ligand>
        <name>Zn(2+)</name>
        <dbReference type="ChEBI" id="CHEBI:29105"/>
        <note>catalytic</note>
    </ligand>
</feature>
<feature type="binding site" evidence="1">
    <location>
        <position position="128"/>
    </location>
    <ligand>
        <name>Zn(2+)</name>
        <dbReference type="ChEBI" id="CHEBI:29105"/>
        <note>catalytic</note>
    </ligand>
</feature>